<gene>
    <name type="primary">Csrp3</name>
    <name type="synonym">Clp</name>
    <name type="synonym">Mlp</name>
</gene>
<name>CSRP3_MOUSE</name>
<comment type="function">
    <text evidence="1 2 5 8 9">Positive regulator of myogenesis. Acts as a cofactor for myogenic bHLH transcription factors such as MYOD1, and probably MYOG and MYF6. Enhances the DNA-binding activity of the MYOD1:TCF3 isoform E47 complex and may promote formation of a functional MYOD1:TCF3 isoform E47:MEF2A complex involved in myogenesis (By similarity). Plays a crucial and specific role in the organization of cytosolic structures in cardiomyocytes. Could play a role in mechanical stretch sensing. May be a scaffold protein that promotes the assembly of interacting proteins at Z-line structures. It is essential for calcineurin anchorage to the Z line. Required for stress-induced calcineurin-NFAT activation (PubMed:15665106, PubMed:9039266). The role in regulation of cytoskeleton dynamics by association with CFL2 is reported conflictingly. Proposed to contribute to the maintenance of muscle cell integrity through an actin-based mechanism. Can directly bind to actin filaments, cross-link actin filaments into bundles without polarity selectivity and protect them from dilution- and cofilin-mediated depolymerization; the function seems to involve its self-association (By similarity). In vitro can inhibit PKC/PRKCA activity. Proposed to be involved in cardiac stress signaling by down-regulating excessive PKC/PRKCA signaling (PubMed:27353086).</text>
</comment>
<comment type="subunit">
    <text evidence="1 2 6 7">Self-associates. Oligomeric in the cytoplasm and monomeric in the nucleus. Homooligomers preferentially form along the actin cytoskeleton (By similarity). Interacts with TCAP (PubMed:20044516). Interacts with LDHD, MYOD1, MYOG, ACTN2, NRAP, MYF6 (By similarity). Interacts (via N-terminus)D with GLRX3 (via C-terminus) and PPP3CA; GLRX3 and calcineurin compete for interaction with CSRP3 (PubMed:18258855). Interacts with CFL2; the stoichiometry influences F-actin depolymerization and possibly two molecules of CFL2 can interact with one molecule of CSRP3 resulting in the highest functional impact; the interaction is stronger with phosphorylated CFL2 (By similarity).</text>
</comment>
<comment type="subcellular location">
    <subcellularLocation>
        <location evidence="2">Nucleus</location>
    </subcellularLocation>
    <subcellularLocation>
        <location evidence="6">Cytoplasm</location>
    </subcellularLocation>
    <subcellularLocation>
        <location evidence="10">Cytoplasm</location>
        <location evidence="10">Cytoskeleton</location>
    </subcellularLocation>
    <subcellularLocation>
        <location evidence="6">Cytoplasm</location>
        <location evidence="6">Myofibril</location>
        <location evidence="6">Sarcomere</location>
        <location evidence="6">Z line</location>
    </subcellularLocation>
    <subcellularLocation>
        <location evidence="1">Cytoplasm</location>
        <location evidence="1">Myofibril</location>
        <location evidence="1">Sarcomere</location>
    </subcellularLocation>
    <text evidence="2 6">Nucleocytoplasmic shuttling protein (By similarity). Mainly cytoplasmic. In the Z line, found associated with GLRX3 (via C-terminus).</text>
</comment>
<comment type="domain">
    <text evidence="1 2">LIM zinc-binding domain 1 is required for self-association. LIM zinc-binding domain 1 and LIM zinc-binding domain 2 both are required for optimal actin-bundling activity. LIM zinc-binding domain 1 mediates binding to MYOD1. LIM zinc-binding domain 2 mediates binding to SPTB.</text>
</comment>
<comment type="PTM">
    <text evidence="1">Phosphorylated by PKC/PRKCA.</text>
</comment>
<comment type="disruption phenotype">
    <text evidence="5 9">Mutant mice developed dilated cardiomyopathy with hypertrophy and heart failure after birth. Ultrastructural analysis revealed a dramatic disruption of cardiomyocyte cytoarchitecture. At birth, these hearts are not hypertrophic, but already abnormally soft, with cell-autonomous and Csrp3-sensitive alterations in cytoarchitecture. The morphological, functional, and molecular features of the cardiac phenotype in mutant adult mice are undistinguishable from those seen in human heart failure resulting from dilated cardiomyopathy of various etiolologies, these mice can thus be used as model. Heterozygous mice display a more pronounced left ventricular dilation and systolic dysfunction and decreased survival after myocardial infarction.</text>
</comment>
<keyword id="KW-0009">Actin-binding</keyword>
<keyword id="KW-0963">Cytoplasm</keyword>
<keyword id="KW-0206">Cytoskeleton</keyword>
<keyword id="KW-0217">Developmental protein</keyword>
<keyword id="KW-0221">Differentiation</keyword>
<keyword id="KW-0440">LIM domain</keyword>
<keyword id="KW-0479">Metal-binding</keyword>
<keyword id="KW-0517">Myogenesis</keyword>
<keyword id="KW-0539">Nucleus</keyword>
<keyword id="KW-0597">Phosphoprotein</keyword>
<keyword id="KW-1185">Reference proteome</keyword>
<keyword id="KW-0677">Repeat</keyword>
<keyword id="KW-0804">Transcription</keyword>
<keyword id="KW-0805">Transcription regulation</keyword>
<keyword id="KW-0862">Zinc</keyword>
<sequence>MPNWGGGAKCGACEKTVYHAEEIQCNGRSFHKTCFHCMACRKALDSTTVAAHESEIYCKVCYGRRYGPKGIGFGQGAGCLSTDTGEHLGLQFQQSPKPARAATTSNPSKFSAKFGESEKCPRCGKSVYAAEKVMGGGKPWHKTCFRCAICGKSLESTNVTDKDGELYCKVCYAKNFGPTGIGFGGLTQQVEKKE</sequence>
<accession>P50462</accession>
<evidence type="ECO:0000250" key="1">
    <source>
        <dbReference type="UniProtKB" id="P50461"/>
    </source>
</evidence>
<evidence type="ECO:0000250" key="2">
    <source>
        <dbReference type="UniProtKB" id="P50463"/>
    </source>
</evidence>
<evidence type="ECO:0000255" key="3"/>
<evidence type="ECO:0000255" key="4">
    <source>
        <dbReference type="PROSITE-ProRule" id="PRU00125"/>
    </source>
</evidence>
<evidence type="ECO:0000269" key="5">
    <source>
    </source>
</evidence>
<evidence type="ECO:0000269" key="6">
    <source>
    </source>
</evidence>
<evidence type="ECO:0000269" key="7">
    <source>
    </source>
</evidence>
<evidence type="ECO:0000269" key="8">
    <source>
    </source>
</evidence>
<evidence type="ECO:0000269" key="9">
    <source>
    </source>
</evidence>
<evidence type="ECO:0000305" key="10"/>
<evidence type="ECO:0007744" key="11">
    <source>
    </source>
</evidence>
<organism>
    <name type="scientific">Mus musculus</name>
    <name type="common">Mouse</name>
    <dbReference type="NCBI Taxonomy" id="10090"/>
    <lineage>
        <taxon>Eukaryota</taxon>
        <taxon>Metazoa</taxon>
        <taxon>Chordata</taxon>
        <taxon>Craniata</taxon>
        <taxon>Vertebrata</taxon>
        <taxon>Euteleostomi</taxon>
        <taxon>Mammalia</taxon>
        <taxon>Eutheria</taxon>
        <taxon>Euarchontoglires</taxon>
        <taxon>Glires</taxon>
        <taxon>Rodentia</taxon>
        <taxon>Myomorpha</taxon>
        <taxon>Muroidea</taxon>
        <taxon>Muridae</taxon>
        <taxon>Murinae</taxon>
        <taxon>Mus</taxon>
        <taxon>Mus</taxon>
    </lineage>
</organism>
<reference key="1">
    <citation type="journal article" date="1996" name="J. Craniofac. Genet. Dev. Biol.">
        <title>Murine MLP: cloning and expression in the embryonic head.</title>
        <authorList>
            <person name="Harrod G.V."/>
            <person name="Kettunen P.J."/>
            <person name="Jowett A.K."/>
        </authorList>
    </citation>
    <scope>NUCLEOTIDE SEQUENCE [MRNA]</scope>
    <source>
        <strain>MF1</strain>
        <tissue>Mandible</tissue>
    </source>
</reference>
<reference key="2">
    <citation type="submission" date="1996-12" db="EMBL/GenBank/DDBJ databases">
        <authorList>
            <person name="Hashimoto N."/>
            <person name="Ogashiwa M."/>
        </authorList>
    </citation>
    <scope>NUCLEOTIDE SEQUENCE [MRNA]</scope>
    <source>
        <strain>C3H/HeJ</strain>
    </source>
</reference>
<reference key="3">
    <citation type="journal article" date="2004" name="Genome Res.">
        <title>The status, quality, and expansion of the NIH full-length cDNA project: the Mammalian Gene Collection (MGC).</title>
        <authorList>
            <consortium name="The MGC Project Team"/>
        </authorList>
    </citation>
    <scope>NUCLEOTIDE SEQUENCE [LARGE SCALE MRNA]</scope>
    <source>
        <tissue>Liver</tissue>
    </source>
</reference>
<reference key="4">
    <citation type="journal article" date="1997" name="Cell">
        <title>MLP-deficient mice exhibit a disruption of cardiac cytoarchitectural organization, dilated cardiomyopathy, and heart failure.</title>
        <authorList>
            <person name="Arber S."/>
            <person name="Hunter J.J."/>
            <person name="Ross J. Jr."/>
            <person name="Hongo M."/>
            <person name="Sansig G."/>
            <person name="Borg J."/>
            <person name="Perriard J.C."/>
            <person name="Chien K.R."/>
            <person name="Caroni P."/>
        </authorList>
    </citation>
    <scope>FUNCTION</scope>
    <scope>DISRUPTION PHENOTYPE</scope>
    <source>
        <strain>129/Sv</strain>
    </source>
</reference>
<reference key="5">
    <citation type="journal article" date="2005" name="Proc. Natl. Acad. Sci. U.S.A.">
        <title>Attenuation of cardiac remodeling after myocardial infarction by muscle LIM protein-calcineurin signaling at the sarcomeric Z-disc.</title>
        <authorList>
            <person name="Heineke J."/>
            <person name="Ruetten H."/>
            <person name="Willenbockel C."/>
            <person name="Gross S.C."/>
            <person name="Naguib M."/>
            <person name="Schaefer A."/>
            <person name="Kempf T."/>
            <person name="Hilfiker-Kleiner D."/>
            <person name="Caroni P."/>
            <person name="Kraft T."/>
            <person name="Kaiser R.A."/>
            <person name="Molkentin J.D."/>
            <person name="Drexler H."/>
            <person name="Wollert K.C."/>
        </authorList>
    </citation>
    <scope>FUNCTION</scope>
    <scope>DISRUPTION PHENOTYPE</scope>
</reference>
<reference key="6">
    <citation type="journal article" date="2008" name="Circ. Res.">
        <title>PICOT attenuates cardiac hypertrophy by disrupting calcineurin-NFAT signaling.</title>
        <authorList>
            <person name="Jeong D."/>
            <person name="Kim J.M."/>
            <person name="Cha H."/>
            <person name="Oh J.G."/>
            <person name="Park J."/>
            <person name="Yun S.H."/>
            <person name="Ju E.S."/>
            <person name="Jeon E.S."/>
            <person name="Hajjar R.J."/>
            <person name="Park W.J."/>
        </authorList>
    </citation>
    <scope>INTERACTION WITH GLRX3 AND PPP3CA</scope>
    <scope>SUBCELLULAR LOCATION</scope>
</reference>
<reference key="7">
    <citation type="journal article" date="2010" name="Cell">
        <title>A tissue-specific atlas of mouse protein phosphorylation and expression.</title>
        <authorList>
            <person name="Huttlin E.L."/>
            <person name="Jedrychowski M.P."/>
            <person name="Elias J.E."/>
            <person name="Goswami T."/>
            <person name="Rad R."/>
            <person name="Beausoleil S.A."/>
            <person name="Villen J."/>
            <person name="Haas W."/>
            <person name="Sowa M.E."/>
            <person name="Gygi S.P."/>
        </authorList>
    </citation>
    <scope>PHOSPHORYLATION [LARGE SCALE ANALYSIS] AT SER-95 AND SER-111</scope>
    <scope>IDENTIFICATION BY MASS SPECTROMETRY [LARGE SCALE ANALYSIS]</scope>
    <source>
        <tissue>Brown adipose tissue</tissue>
        <tissue>Heart</tissue>
        <tissue>Kidney</tissue>
        <tissue>Liver</tissue>
        <tissue>Lung</tissue>
    </source>
</reference>
<reference key="8">
    <citation type="journal article" date="2010" name="Circ. Res.">
        <title>A common MLP (muscle LIM protein) variant is associated with cardiomyopathy.</title>
        <authorList>
            <person name="Knoll R."/>
            <person name="Kostin S."/>
            <person name="Klede S."/>
            <person name="Savvatis K."/>
            <person name="Klinge L."/>
            <person name="Stehle I."/>
            <person name="Gunkel S."/>
            <person name="Kotter S."/>
            <person name="Babicz K."/>
            <person name="Sohns M."/>
            <person name="Miocic S."/>
            <person name="Didie M."/>
            <person name="Knoll G."/>
            <person name="Zimmermann W.H."/>
            <person name="Thelen P."/>
            <person name="Bickeboller H."/>
            <person name="Maier L.S."/>
            <person name="Schaper W."/>
            <person name="Schaper J."/>
            <person name="Kraft T."/>
            <person name="Tschope C."/>
            <person name="Linke W.A."/>
            <person name="Chien K.R."/>
        </authorList>
    </citation>
    <scope>MUTAGENESIS OF TRP-4</scope>
    <scope>INTERACTION WITH TCAP</scope>
</reference>
<reference key="9">
    <citation type="journal article" date="2016" name="Nat. Commun.">
        <title>MLP and CARP are linked to chronic PKCalpha signalling in dilated cardiomyopathy.</title>
        <authorList>
            <person name="Lange S."/>
            <person name="Gehmlich K."/>
            <person name="Lun A.S."/>
            <person name="Blondelle J."/>
            <person name="Hooper C."/>
            <person name="Dalton N.D."/>
            <person name="Alvarez E.A."/>
            <person name="Zhang X."/>
            <person name="Bang M.L."/>
            <person name="Abassi Y.A."/>
            <person name="Dos Remedios C.G."/>
            <person name="Peterson K.L."/>
            <person name="Chen J."/>
            <person name="Ehler E."/>
        </authorList>
    </citation>
    <scope>FUNCTION</scope>
    <scope>PHOSPHORYLATION</scope>
</reference>
<protein>
    <recommendedName>
        <fullName>Cysteine and glycine-rich protein 3</fullName>
    </recommendedName>
    <alternativeName>
        <fullName>Cysteine-rich protein 3</fullName>
        <shortName>CRP3</shortName>
    </alternativeName>
    <alternativeName>
        <fullName>LIM domain protein, cardiac</fullName>
    </alternativeName>
    <alternativeName>
        <fullName>Muscle LIM protein</fullName>
    </alternativeName>
</protein>
<proteinExistence type="evidence at protein level"/>
<feature type="chain" id="PRO_0000075728" description="Cysteine and glycine-rich protein 3">
    <location>
        <begin position="1"/>
        <end position="194"/>
    </location>
</feature>
<feature type="domain" description="LIM zinc-binding 1" evidence="4">
    <location>
        <begin position="10"/>
        <end position="61"/>
    </location>
</feature>
<feature type="domain" description="LIM zinc-binding 2" evidence="4">
    <location>
        <begin position="120"/>
        <end position="171"/>
    </location>
</feature>
<feature type="region of interest" description="Interaction with TCAP" evidence="1">
    <location>
        <begin position="1"/>
        <end position="5"/>
    </location>
</feature>
<feature type="region of interest" description="Interaction with CLF2" evidence="1">
    <location>
        <begin position="94"/>
        <end position="105"/>
    </location>
</feature>
<feature type="short sequence motif" description="Nuclear localization signal" evidence="2 3">
    <location>
        <begin position="64"/>
        <end position="69"/>
    </location>
</feature>
<feature type="modified residue" description="Phosphoserine" evidence="11">
    <location>
        <position position="95"/>
    </location>
</feature>
<feature type="modified residue" description="Phosphoserine" evidence="11">
    <location>
        <position position="111"/>
    </location>
</feature>
<feature type="modified residue" description="Phosphoserine" evidence="2">
    <location>
        <position position="153"/>
    </location>
</feature>
<feature type="mutagenesis site" description="Mice develop an age- and gene dosage-dependent hypertrophic cardiomyopathy and heart failure phenotype, characterized by almost complete loss of contractile reserve under catecholamine induced stress. They display increased in septum wall thickness, fractional shortening, and wall thickness per diameter (h/r). There is also evidence for skeletal muscle pathology. In addition, homozygous mutants show increased left ventricle (LC) mass per body weight (BW) and significantly reduced body weight. An increased nuclear localization of Csrp3 is also observed. Decreases interaction with TCAP." evidence="7">
    <original>W</original>
    <variation>R</variation>
    <location>
        <position position="4"/>
    </location>
</feature>
<dbReference type="EMBL" id="Z49883">
    <property type="protein sequence ID" value="CAA90039.1"/>
    <property type="molecule type" value="mRNA"/>
</dbReference>
<dbReference type="EMBL" id="D88791">
    <property type="protein sequence ID" value="BAA13721.1"/>
    <property type="molecule type" value="mRNA"/>
</dbReference>
<dbReference type="EMBL" id="BC061131">
    <property type="protein sequence ID" value="AAH61131.1"/>
    <property type="molecule type" value="mRNA"/>
</dbReference>
<dbReference type="CCDS" id="CCDS21305.1"/>
<dbReference type="PIR" id="S57472">
    <property type="entry name" value="S57472"/>
</dbReference>
<dbReference type="RefSeq" id="NP_001185770.1">
    <property type="nucleotide sequence ID" value="NM_001198841.1"/>
</dbReference>
<dbReference type="RefSeq" id="NP_038836.1">
    <property type="nucleotide sequence ID" value="NM_013808.4"/>
</dbReference>
<dbReference type="BMRB" id="P50462"/>
<dbReference type="SMR" id="P50462"/>
<dbReference type="BioGRID" id="198954">
    <property type="interactions" value="6"/>
</dbReference>
<dbReference type="FunCoup" id="P50462">
    <property type="interactions" value="810"/>
</dbReference>
<dbReference type="IntAct" id="P50462">
    <property type="interactions" value="3"/>
</dbReference>
<dbReference type="STRING" id="10090.ENSMUSP00000129378"/>
<dbReference type="GlyGen" id="P50462">
    <property type="glycosylation" value="1 site, 1 O-linked glycan (1 site)"/>
</dbReference>
<dbReference type="iPTMnet" id="P50462"/>
<dbReference type="PhosphoSitePlus" id="P50462"/>
<dbReference type="SwissPalm" id="P50462"/>
<dbReference type="jPOST" id="P50462"/>
<dbReference type="PaxDb" id="10090-ENSMUSP00000129378"/>
<dbReference type="PeptideAtlas" id="P50462"/>
<dbReference type="ProteomicsDB" id="285379"/>
<dbReference type="Antibodypedia" id="12424">
    <property type="antibodies" value="309 antibodies from 34 providers"/>
</dbReference>
<dbReference type="DNASU" id="13009"/>
<dbReference type="Ensembl" id="ENSMUST00000032658.14">
    <property type="protein sequence ID" value="ENSMUSP00000032658.7"/>
    <property type="gene ID" value="ENSMUSG00000030470.16"/>
</dbReference>
<dbReference type="Ensembl" id="ENSMUST00000167786.4">
    <property type="protein sequence ID" value="ENSMUSP00000129378.3"/>
    <property type="gene ID" value="ENSMUSG00000030470.16"/>
</dbReference>
<dbReference type="GeneID" id="13009"/>
<dbReference type="KEGG" id="mmu:13009"/>
<dbReference type="UCSC" id="uc009hax.2">
    <property type="organism name" value="mouse"/>
</dbReference>
<dbReference type="AGR" id="MGI:1330824"/>
<dbReference type="CTD" id="8048"/>
<dbReference type="MGI" id="MGI:1330824">
    <property type="gene designation" value="Csrp3"/>
</dbReference>
<dbReference type="VEuPathDB" id="HostDB:ENSMUSG00000030470"/>
<dbReference type="eggNOG" id="KOG1700">
    <property type="taxonomic scope" value="Eukaryota"/>
</dbReference>
<dbReference type="GeneTree" id="ENSGT00940000159533"/>
<dbReference type="HOGENOM" id="CLU_054591_1_1_1"/>
<dbReference type="InParanoid" id="P50462"/>
<dbReference type="OMA" id="TCYGRRY"/>
<dbReference type="OrthoDB" id="8062037at2759"/>
<dbReference type="PhylomeDB" id="P50462"/>
<dbReference type="TreeFam" id="TF313758"/>
<dbReference type="BioGRID-ORCS" id="13009">
    <property type="hits" value="1 hit in 77 CRISPR screens"/>
</dbReference>
<dbReference type="ChiTaRS" id="Marcksl1">
    <property type="organism name" value="mouse"/>
</dbReference>
<dbReference type="PRO" id="PR:P50462"/>
<dbReference type="Proteomes" id="UP000000589">
    <property type="component" value="Chromosome 7"/>
</dbReference>
<dbReference type="RNAct" id="P50462">
    <property type="molecule type" value="protein"/>
</dbReference>
<dbReference type="Bgee" id="ENSMUSG00000030470">
    <property type="expression patterns" value="Expressed in atrioventricular valve and 134 other cell types or tissues"/>
</dbReference>
<dbReference type="ExpressionAtlas" id="P50462">
    <property type="expression patterns" value="baseline and differential"/>
</dbReference>
<dbReference type="GO" id="GO:0005737">
    <property type="term" value="C:cytoplasm"/>
    <property type="evidence" value="ECO:0000266"/>
    <property type="project" value="MGI"/>
</dbReference>
<dbReference type="GO" id="GO:0005856">
    <property type="term" value="C:cytoskeleton"/>
    <property type="evidence" value="ECO:0007669"/>
    <property type="project" value="UniProtKB-SubCell"/>
</dbReference>
<dbReference type="GO" id="GO:0005829">
    <property type="term" value="C:cytosol"/>
    <property type="evidence" value="ECO:0007669"/>
    <property type="project" value="Ensembl"/>
</dbReference>
<dbReference type="GO" id="GO:0005654">
    <property type="term" value="C:nucleoplasm"/>
    <property type="evidence" value="ECO:0007669"/>
    <property type="project" value="Ensembl"/>
</dbReference>
<dbReference type="GO" id="GO:0005634">
    <property type="term" value="C:nucleus"/>
    <property type="evidence" value="ECO:0000266"/>
    <property type="project" value="MGI"/>
</dbReference>
<dbReference type="GO" id="GO:0030018">
    <property type="term" value="C:Z disc"/>
    <property type="evidence" value="ECO:0000314"/>
    <property type="project" value="MGI"/>
</dbReference>
<dbReference type="GO" id="GO:0003779">
    <property type="term" value="F:actin binding"/>
    <property type="evidence" value="ECO:0007669"/>
    <property type="project" value="UniProtKB-KW"/>
</dbReference>
<dbReference type="GO" id="GO:0042805">
    <property type="term" value="F:actinin binding"/>
    <property type="evidence" value="ECO:0000314"/>
    <property type="project" value="BHF-UCL"/>
</dbReference>
<dbReference type="GO" id="GO:0042802">
    <property type="term" value="F:identical protein binding"/>
    <property type="evidence" value="ECO:0007669"/>
    <property type="project" value="Ensembl"/>
</dbReference>
<dbReference type="GO" id="GO:0046872">
    <property type="term" value="F:metal ion binding"/>
    <property type="evidence" value="ECO:0007669"/>
    <property type="project" value="UniProtKB-KW"/>
</dbReference>
<dbReference type="GO" id="GO:0043426">
    <property type="term" value="F:MRF binding"/>
    <property type="evidence" value="ECO:0000266"/>
    <property type="project" value="MGI"/>
</dbReference>
<dbReference type="GO" id="GO:0061629">
    <property type="term" value="F:RNA polymerase II-specific DNA-binding transcription factor binding"/>
    <property type="evidence" value="ECO:0000266"/>
    <property type="project" value="MGI"/>
</dbReference>
<dbReference type="GO" id="GO:0008307">
    <property type="term" value="F:structural constituent of muscle"/>
    <property type="evidence" value="ECO:0000315"/>
    <property type="project" value="BHF-UCL"/>
</dbReference>
<dbReference type="GO" id="GO:0031433">
    <property type="term" value="F:telethonin binding"/>
    <property type="evidence" value="ECO:0000353"/>
    <property type="project" value="BHF-UCL"/>
</dbReference>
<dbReference type="GO" id="GO:0060048">
    <property type="term" value="P:cardiac muscle contraction"/>
    <property type="evidence" value="ECO:0000315"/>
    <property type="project" value="BHF-UCL"/>
</dbReference>
<dbReference type="GO" id="GO:0003300">
    <property type="term" value="P:cardiac muscle hypertrophy"/>
    <property type="evidence" value="ECO:0007669"/>
    <property type="project" value="Ensembl"/>
</dbReference>
<dbReference type="GO" id="GO:0048738">
    <property type="term" value="P:cardiac muscle tissue development"/>
    <property type="evidence" value="ECO:0000316"/>
    <property type="project" value="MGI"/>
</dbReference>
<dbReference type="GO" id="GO:0055003">
    <property type="term" value="P:cardiac myofibril assembly"/>
    <property type="evidence" value="ECO:0000315"/>
    <property type="project" value="BHF-UCL"/>
</dbReference>
<dbReference type="GO" id="GO:0035995">
    <property type="term" value="P:detection of muscle stretch"/>
    <property type="evidence" value="ECO:0000315"/>
    <property type="project" value="BHF-UCL"/>
</dbReference>
<dbReference type="GO" id="GO:0042593">
    <property type="term" value="P:glucose homeostasis"/>
    <property type="evidence" value="ECO:0000315"/>
    <property type="project" value="MGI"/>
</dbReference>
<dbReference type="GO" id="GO:0007507">
    <property type="term" value="P:heart development"/>
    <property type="evidence" value="ECO:0000316"/>
    <property type="project" value="MGI"/>
</dbReference>
<dbReference type="GO" id="GO:0006954">
    <property type="term" value="P:inflammatory response"/>
    <property type="evidence" value="ECO:0000315"/>
    <property type="project" value="MGI"/>
</dbReference>
<dbReference type="GO" id="GO:0008286">
    <property type="term" value="P:insulin receptor signaling pathway"/>
    <property type="evidence" value="ECO:0000315"/>
    <property type="project" value="MGI"/>
</dbReference>
<dbReference type="GO" id="GO:0006874">
    <property type="term" value="P:intracellular calcium ion homeostasis"/>
    <property type="evidence" value="ECO:0000316"/>
    <property type="project" value="MGI"/>
</dbReference>
<dbReference type="GO" id="GO:0046716">
    <property type="term" value="P:muscle cell cellular homeostasis"/>
    <property type="evidence" value="ECO:0000316"/>
    <property type="project" value="MGI"/>
</dbReference>
<dbReference type="GO" id="GO:0007517">
    <property type="term" value="P:muscle organ development"/>
    <property type="evidence" value="ECO:0007669"/>
    <property type="project" value="UniProtKB-KW"/>
</dbReference>
<dbReference type="GO" id="GO:1903919">
    <property type="term" value="P:negative regulation of actin filament severing"/>
    <property type="evidence" value="ECO:0000266"/>
    <property type="project" value="MGI"/>
</dbReference>
<dbReference type="GO" id="GO:0045662">
    <property type="term" value="P:negative regulation of myoblast differentiation"/>
    <property type="evidence" value="ECO:0000266"/>
    <property type="project" value="MGI"/>
</dbReference>
<dbReference type="GO" id="GO:0141212">
    <property type="term" value="P:phospholipase C/protein kinase C signal transduction"/>
    <property type="evidence" value="ECO:0000316"/>
    <property type="project" value="MGI"/>
</dbReference>
<dbReference type="GO" id="GO:1903920">
    <property type="term" value="P:positive regulation of actin filament severing"/>
    <property type="evidence" value="ECO:0000266"/>
    <property type="project" value="MGI"/>
</dbReference>
<dbReference type="GO" id="GO:0045663">
    <property type="term" value="P:positive regulation of myoblast differentiation"/>
    <property type="evidence" value="ECO:0000266"/>
    <property type="project" value="MGI"/>
</dbReference>
<dbReference type="GO" id="GO:0010831">
    <property type="term" value="P:positive regulation of myotube differentiation"/>
    <property type="evidence" value="ECO:0000266"/>
    <property type="project" value="MGI"/>
</dbReference>
<dbReference type="GO" id="GO:0045944">
    <property type="term" value="P:positive regulation of transcription by RNA polymerase II"/>
    <property type="evidence" value="ECO:0000266"/>
    <property type="project" value="MGI"/>
</dbReference>
<dbReference type="GO" id="GO:0033365">
    <property type="term" value="P:protein localization to organelle"/>
    <property type="evidence" value="ECO:0000315"/>
    <property type="project" value="BHF-UCL"/>
</dbReference>
<dbReference type="GO" id="GO:1903076">
    <property type="term" value="P:regulation of protein localization to plasma membrane"/>
    <property type="evidence" value="ECO:0000315"/>
    <property type="project" value="MGI"/>
</dbReference>
<dbReference type="GO" id="GO:0002026">
    <property type="term" value="P:regulation of the force of heart contraction"/>
    <property type="evidence" value="ECO:0000316"/>
    <property type="project" value="MGI"/>
</dbReference>
<dbReference type="GO" id="GO:0033292">
    <property type="term" value="P:T-tubule organization"/>
    <property type="evidence" value="ECO:0000316"/>
    <property type="project" value="MGI"/>
</dbReference>
<dbReference type="CDD" id="cd09481">
    <property type="entry name" value="LIM1_CRP3"/>
    <property type="match status" value="1"/>
</dbReference>
<dbReference type="CDD" id="cd09482">
    <property type="entry name" value="LIM2_CRP3"/>
    <property type="match status" value="1"/>
</dbReference>
<dbReference type="FunFam" id="2.10.110.10:FF:000001">
    <property type="entry name" value="Cysteine and glycine-rich protein 1"/>
    <property type="match status" value="2"/>
</dbReference>
<dbReference type="Gene3D" id="2.10.110.10">
    <property type="entry name" value="Cysteine Rich Protein"/>
    <property type="match status" value="2"/>
</dbReference>
<dbReference type="InterPro" id="IPR001781">
    <property type="entry name" value="Znf_LIM"/>
</dbReference>
<dbReference type="PANTHER" id="PTHR24215:SF1">
    <property type="entry name" value="CYSTEINE AND GLYCINE-RICH PROTEIN 3"/>
    <property type="match status" value="1"/>
</dbReference>
<dbReference type="PANTHER" id="PTHR24215">
    <property type="entry name" value="RHO-GTPASE-ACTIVATING PROTEIN LRG1"/>
    <property type="match status" value="1"/>
</dbReference>
<dbReference type="Pfam" id="PF00412">
    <property type="entry name" value="LIM"/>
    <property type="match status" value="2"/>
</dbReference>
<dbReference type="SMART" id="SM00132">
    <property type="entry name" value="LIM"/>
    <property type="match status" value="2"/>
</dbReference>
<dbReference type="SUPFAM" id="SSF57716">
    <property type="entry name" value="Glucocorticoid receptor-like (DNA-binding domain)"/>
    <property type="match status" value="4"/>
</dbReference>
<dbReference type="PROSITE" id="PS00478">
    <property type="entry name" value="LIM_DOMAIN_1"/>
    <property type="match status" value="2"/>
</dbReference>
<dbReference type="PROSITE" id="PS50023">
    <property type="entry name" value="LIM_DOMAIN_2"/>
    <property type="match status" value="2"/>
</dbReference>